<protein>
    <recommendedName>
        <fullName>Transcription initiation factor IIA small chain homolog</fullName>
    </recommendedName>
</protein>
<reference key="1">
    <citation type="journal article" date="1998" name="Science">
        <title>Genome sequence of the nematode C. elegans: a platform for investigating biology.</title>
        <authorList>
            <consortium name="The C. elegans sequencing consortium"/>
        </authorList>
    </citation>
    <scope>NUCLEOTIDE SEQUENCE [LARGE SCALE GENOMIC DNA]</scope>
    <source>
        <strain>Bristol N2</strain>
    </source>
</reference>
<feature type="chain" id="PRO_0000194054" description="Transcription initiation factor IIA small chain homolog">
    <location>
        <begin position="1"/>
        <end position="139"/>
    </location>
</feature>
<feature type="region of interest" description="Disordered" evidence="1">
    <location>
        <begin position="113"/>
        <end position="139"/>
    </location>
</feature>
<proteinExistence type="inferred from homology"/>
<evidence type="ECO:0000256" key="1">
    <source>
        <dbReference type="SAM" id="MobiDB-lite"/>
    </source>
</evidence>
<evidence type="ECO:0000305" key="2"/>
<comment type="subcellular location">
    <subcellularLocation>
        <location evidence="2">Nucleus</location>
    </subcellularLocation>
</comment>
<comment type="similarity">
    <text evidence="2">Belongs to the TFIIA subunit 2 family.</text>
</comment>
<gene>
    <name type="ORF">B0336.13</name>
</gene>
<organism>
    <name type="scientific">Caenorhabditis elegans</name>
    <dbReference type="NCBI Taxonomy" id="6239"/>
    <lineage>
        <taxon>Eukaryota</taxon>
        <taxon>Metazoa</taxon>
        <taxon>Ecdysozoa</taxon>
        <taxon>Nematoda</taxon>
        <taxon>Chromadorea</taxon>
        <taxon>Rhabditida</taxon>
        <taxon>Rhabditina</taxon>
        <taxon>Rhabditomorpha</taxon>
        <taxon>Rhabditoidea</taxon>
        <taxon>Rhabditidae</taxon>
        <taxon>Peloderinae</taxon>
        <taxon>Caenorhabditis</taxon>
    </lineage>
</organism>
<sequence>MSSYALYRGTTLGQALDKTLEDMESEGLLTKSLASKVLQQFDKSMNKQISRLPKEKMNFCATQLLTYRYCDNVWTFILNNVTLKDPQRSFDEPIDKLKVVACDGRQTSLLQTLSAQGPSKRVNRAHAAAAGDDEDDDSD</sequence>
<dbReference type="EMBL" id="FO080138">
    <property type="protein sequence ID" value="CCD61534.1"/>
    <property type="molecule type" value="Genomic_DNA"/>
</dbReference>
<dbReference type="RefSeq" id="NP_001379557.1">
    <property type="nucleotide sequence ID" value="NM_001392105.1"/>
</dbReference>
<dbReference type="RefSeq" id="NP_498226.1">
    <property type="nucleotide sequence ID" value="NM_065825.3"/>
</dbReference>
<dbReference type="SMR" id="Q9BIB4"/>
<dbReference type="BioGRID" id="41018">
    <property type="interactions" value="7"/>
</dbReference>
<dbReference type="FunCoup" id="Q9BIB4">
    <property type="interactions" value="170"/>
</dbReference>
<dbReference type="STRING" id="6239.B0336.13.1"/>
<dbReference type="PaxDb" id="6239-B0336.13"/>
<dbReference type="PeptideAtlas" id="Q9BIB4"/>
<dbReference type="EnsemblMetazoa" id="B0336.13.1">
    <property type="protein sequence ID" value="B0336.13.1"/>
    <property type="gene ID" value="WBGene00015150"/>
</dbReference>
<dbReference type="GeneID" id="175791"/>
<dbReference type="UCSC" id="B0336.13">
    <property type="organism name" value="c. elegans"/>
</dbReference>
<dbReference type="AGR" id="WB:WBGene00015150"/>
<dbReference type="WormBase" id="B0336.13">
    <property type="protein sequence ID" value="CE26429"/>
    <property type="gene ID" value="WBGene00015150"/>
</dbReference>
<dbReference type="eggNOG" id="KOG3463">
    <property type="taxonomic scope" value="Eukaryota"/>
</dbReference>
<dbReference type="GeneTree" id="ENSGT00390000014572"/>
<dbReference type="HOGENOM" id="CLU_112964_1_1_1"/>
<dbReference type="InParanoid" id="Q9BIB4"/>
<dbReference type="OMA" id="ACDGRQT"/>
<dbReference type="OrthoDB" id="586585at2759"/>
<dbReference type="PhylomeDB" id="Q9BIB4"/>
<dbReference type="PRO" id="PR:Q9BIB4"/>
<dbReference type="Proteomes" id="UP000001940">
    <property type="component" value="Chromosome III"/>
</dbReference>
<dbReference type="Bgee" id="WBGene00015150">
    <property type="expression patterns" value="Expressed in germ line (C elegans) and 4 other cell types or tissues"/>
</dbReference>
<dbReference type="GO" id="GO:0005672">
    <property type="term" value="C:transcription factor TFIIA complex"/>
    <property type="evidence" value="ECO:0000318"/>
    <property type="project" value="GO_Central"/>
</dbReference>
<dbReference type="GO" id="GO:0016251">
    <property type="term" value="F:RNA polymerase II general transcription initiation factor activity"/>
    <property type="evidence" value="ECO:0000318"/>
    <property type="project" value="GO_Central"/>
</dbReference>
<dbReference type="GO" id="GO:0017025">
    <property type="term" value="F:TBP-class protein binding"/>
    <property type="evidence" value="ECO:0000318"/>
    <property type="project" value="GO_Central"/>
</dbReference>
<dbReference type="GO" id="GO:0051123">
    <property type="term" value="P:RNA polymerase II preinitiation complex assembly"/>
    <property type="evidence" value="ECO:0000318"/>
    <property type="project" value="GO_Central"/>
</dbReference>
<dbReference type="CDD" id="cd10014">
    <property type="entry name" value="TFIIA_gamma_C"/>
    <property type="match status" value="1"/>
</dbReference>
<dbReference type="CDD" id="cd10145">
    <property type="entry name" value="TFIIA_gamma_N"/>
    <property type="match status" value="1"/>
</dbReference>
<dbReference type="FunFam" id="1.10.287.190:FF:000001">
    <property type="entry name" value="Transcription initiation factor IIA subunit 2"/>
    <property type="match status" value="1"/>
</dbReference>
<dbReference type="FunFam" id="2.30.18.10:FF:000001">
    <property type="entry name" value="Transcription initiation factor IIA subunit 2"/>
    <property type="match status" value="1"/>
</dbReference>
<dbReference type="Gene3D" id="2.30.18.10">
    <property type="entry name" value="Transcription factor IIA (TFIIA), beta-barrel domain"/>
    <property type="match status" value="1"/>
</dbReference>
<dbReference type="Gene3D" id="1.10.287.190">
    <property type="entry name" value="Transcription factor IIA gamma subunit, alpha-helical domain"/>
    <property type="match status" value="1"/>
</dbReference>
<dbReference type="InterPro" id="IPR009083">
    <property type="entry name" value="TFIIA_a-hlx"/>
</dbReference>
<dbReference type="InterPro" id="IPR009088">
    <property type="entry name" value="TFIIA_b-brl"/>
</dbReference>
<dbReference type="InterPro" id="IPR003194">
    <property type="entry name" value="TFIIA_gsu"/>
</dbReference>
<dbReference type="InterPro" id="IPR015871">
    <property type="entry name" value="TFIIA_gsu_C"/>
</dbReference>
<dbReference type="InterPro" id="IPR015872">
    <property type="entry name" value="TFIIA_gsu_N"/>
</dbReference>
<dbReference type="PANTHER" id="PTHR10966">
    <property type="entry name" value="TRANSCRIPTION INITIATION FACTOR IIA SUBUNIT 2"/>
    <property type="match status" value="1"/>
</dbReference>
<dbReference type="Pfam" id="PF02751">
    <property type="entry name" value="TFIIA_gamma_C"/>
    <property type="match status" value="1"/>
</dbReference>
<dbReference type="Pfam" id="PF02268">
    <property type="entry name" value="TFIIA_gamma_N"/>
    <property type="match status" value="1"/>
</dbReference>
<dbReference type="SUPFAM" id="SSF47396">
    <property type="entry name" value="Transcription factor IIA (TFIIA), alpha-helical domain"/>
    <property type="match status" value="1"/>
</dbReference>
<dbReference type="SUPFAM" id="SSF50784">
    <property type="entry name" value="Transcription factor IIA (TFIIA), beta-barrel domain"/>
    <property type="match status" value="1"/>
</dbReference>
<keyword id="KW-0539">Nucleus</keyword>
<keyword id="KW-1185">Reference proteome</keyword>
<keyword id="KW-0804">Transcription</keyword>
<keyword id="KW-0805">Transcription regulation</keyword>
<name>YMYD_CAEEL</name>
<accession>Q9BIB4</accession>